<accession>Q86V35</accession>
<name>CABP7_HUMAN</name>
<evidence type="ECO:0000250" key="1"/>
<evidence type="ECO:0000255" key="2"/>
<evidence type="ECO:0000255" key="3">
    <source>
        <dbReference type="PROSITE-ProRule" id="PRU00448"/>
    </source>
</evidence>
<evidence type="ECO:0000269" key="4">
    <source>
    </source>
</evidence>
<evidence type="ECO:0000305" key="5">
    <source>
    </source>
</evidence>
<evidence type="ECO:0007829" key="6">
    <source>
        <dbReference type="PDB" id="2LV7"/>
    </source>
</evidence>
<organism>
    <name type="scientific">Homo sapiens</name>
    <name type="common">Human</name>
    <dbReference type="NCBI Taxonomy" id="9606"/>
    <lineage>
        <taxon>Eukaryota</taxon>
        <taxon>Metazoa</taxon>
        <taxon>Chordata</taxon>
        <taxon>Craniata</taxon>
        <taxon>Vertebrata</taxon>
        <taxon>Euteleostomi</taxon>
        <taxon>Mammalia</taxon>
        <taxon>Eutheria</taxon>
        <taxon>Euarchontoglires</taxon>
        <taxon>Primates</taxon>
        <taxon>Haplorrhini</taxon>
        <taxon>Catarrhini</taxon>
        <taxon>Hominidae</taxon>
        <taxon>Homo</taxon>
    </lineage>
</organism>
<dbReference type="EMBL" id="BC051805">
    <property type="protein sequence ID" value="AAH51805.1"/>
    <property type="molecule type" value="mRNA"/>
</dbReference>
<dbReference type="CCDS" id="CCDS13867.1"/>
<dbReference type="RefSeq" id="NP_872333.1">
    <property type="nucleotide sequence ID" value="NM_182527.3"/>
</dbReference>
<dbReference type="PDB" id="2LV7">
    <property type="method" value="NMR"/>
    <property type="chains" value="A=1-100"/>
</dbReference>
<dbReference type="PDBsum" id="2LV7"/>
<dbReference type="BMRB" id="Q86V35"/>
<dbReference type="SMR" id="Q86V35"/>
<dbReference type="BioGRID" id="127897">
    <property type="interactions" value="5"/>
</dbReference>
<dbReference type="FunCoup" id="Q86V35">
    <property type="interactions" value="39"/>
</dbReference>
<dbReference type="IntAct" id="Q86V35">
    <property type="interactions" value="2"/>
</dbReference>
<dbReference type="STRING" id="9606.ENSP00000216144"/>
<dbReference type="iPTMnet" id="Q86V35"/>
<dbReference type="PhosphoSitePlus" id="Q86V35"/>
<dbReference type="BioMuta" id="CABP7"/>
<dbReference type="DMDM" id="37537777"/>
<dbReference type="jPOST" id="Q86V35"/>
<dbReference type="MassIVE" id="Q86V35"/>
<dbReference type="PaxDb" id="9606-ENSP00000216144"/>
<dbReference type="PeptideAtlas" id="Q86V35"/>
<dbReference type="ProteomicsDB" id="69960"/>
<dbReference type="Antibodypedia" id="24571">
    <property type="antibodies" value="113 antibodies from 28 providers"/>
</dbReference>
<dbReference type="DNASU" id="164633"/>
<dbReference type="Ensembl" id="ENST00000216144.4">
    <property type="protein sequence ID" value="ENSP00000216144.3"/>
    <property type="gene ID" value="ENSG00000100314.4"/>
</dbReference>
<dbReference type="GeneID" id="164633"/>
<dbReference type="KEGG" id="hsa:164633"/>
<dbReference type="MANE-Select" id="ENST00000216144.4">
    <property type="protein sequence ID" value="ENSP00000216144.3"/>
    <property type="RefSeq nucleotide sequence ID" value="NM_182527.3"/>
    <property type="RefSeq protein sequence ID" value="NP_872333.1"/>
</dbReference>
<dbReference type="UCSC" id="uc003agl.4">
    <property type="organism name" value="human"/>
</dbReference>
<dbReference type="AGR" id="HGNC:20834"/>
<dbReference type="CTD" id="164633"/>
<dbReference type="GeneCards" id="CABP7"/>
<dbReference type="HGNC" id="HGNC:20834">
    <property type="gene designation" value="CABP7"/>
</dbReference>
<dbReference type="HPA" id="ENSG00000100314">
    <property type="expression patterns" value="Tissue enriched (brain)"/>
</dbReference>
<dbReference type="MIM" id="618759">
    <property type="type" value="gene"/>
</dbReference>
<dbReference type="neXtProt" id="NX_Q86V35"/>
<dbReference type="OpenTargets" id="ENSG00000100314"/>
<dbReference type="PharmGKB" id="PA134928335"/>
<dbReference type="VEuPathDB" id="HostDB:ENSG00000100314"/>
<dbReference type="eggNOG" id="KOG0027">
    <property type="taxonomic scope" value="Eukaryota"/>
</dbReference>
<dbReference type="GeneTree" id="ENSGT00940000159368"/>
<dbReference type="HOGENOM" id="CLU_106115_0_0_1"/>
<dbReference type="InParanoid" id="Q86V35"/>
<dbReference type="OMA" id="TQQIKQT"/>
<dbReference type="OrthoDB" id="26525at2759"/>
<dbReference type="PAN-GO" id="Q86V35">
    <property type="GO annotations" value="1 GO annotation based on evolutionary models"/>
</dbReference>
<dbReference type="PhylomeDB" id="Q86V35"/>
<dbReference type="TreeFam" id="TF331025"/>
<dbReference type="PathwayCommons" id="Q86V35"/>
<dbReference type="SignaLink" id="Q86V35"/>
<dbReference type="BioGRID-ORCS" id="164633">
    <property type="hits" value="12 hits in 1140 CRISPR screens"/>
</dbReference>
<dbReference type="ChiTaRS" id="CABP7">
    <property type="organism name" value="human"/>
</dbReference>
<dbReference type="EvolutionaryTrace" id="Q86V35"/>
<dbReference type="GenomeRNAi" id="164633"/>
<dbReference type="Pharos" id="Q86V35">
    <property type="development level" value="Tbio"/>
</dbReference>
<dbReference type="PRO" id="PR:Q86V35"/>
<dbReference type="Proteomes" id="UP000005640">
    <property type="component" value="Chromosome 22"/>
</dbReference>
<dbReference type="RNAct" id="Q86V35">
    <property type="molecule type" value="protein"/>
</dbReference>
<dbReference type="Bgee" id="ENSG00000100314">
    <property type="expression patterns" value="Expressed in pons and 96 other cell types or tissues"/>
</dbReference>
<dbReference type="GO" id="GO:0048471">
    <property type="term" value="C:perinuclear region of cytoplasm"/>
    <property type="evidence" value="ECO:0007669"/>
    <property type="project" value="UniProtKB-SubCell"/>
</dbReference>
<dbReference type="GO" id="GO:0005886">
    <property type="term" value="C:plasma membrane"/>
    <property type="evidence" value="ECO:0007669"/>
    <property type="project" value="UniProtKB-SubCell"/>
</dbReference>
<dbReference type="GO" id="GO:0032588">
    <property type="term" value="C:trans-Golgi network membrane"/>
    <property type="evidence" value="ECO:0000314"/>
    <property type="project" value="MGI"/>
</dbReference>
<dbReference type="GO" id="GO:0005509">
    <property type="term" value="F:calcium ion binding"/>
    <property type="evidence" value="ECO:0007669"/>
    <property type="project" value="InterPro"/>
</dbReference>
<dbReference type="CDD" id="cd00051">
    <property type="entry name" value="EFh"/>
    <property type="match status" value="1"/>
</dbReference>
<dbReference type="FunFam" id="1.10.238.10:FF:000115">
    <property type="entry name" value="Calcium-binding protein 8"/>
    <property type="match status" value="1"/>
</dbReference>
<dbReference type="Gene3D" id="1.10.238.10">
    <property type="entry name" value="EF-hand"/>
    <property type="match status" value="1"/>
</dbReference>
<dbReference type="InterPro" id="IPR051111">
    <property type="entry name" value="Ca-binding_regulatory"/>
</dbReference>
<dbReference type="InterPro" id="IPR011992">
    <property type="entry name" value="EF-hand-dom_pair"/>
</dbReference>
<dbReference type="InterPro" id="IPR018247">
    <property type="entry name" value="EF_Hand_1_Ca_BS"/>
</dbReference>
<dbReference type="InterPro" id="IPR002048">
    <property type="entry name" value="EF_hand_dom"/>
</dbReference>
<dbReference type="InterPro" id="IPR001751">
    <property type="entry name" value="S100/CaBP7/8-like_CS"/>
</dbReference>
<dbReference type="PANTHER" id="PTHR46311:SF1">
    <property type="entry name" value="CALCIUM-BINDING PROTEIN 7"/>
    <property type="match status" value="1"/>
</dbReference>
<dbReference type="PANTHER" id="PTHR46311">
    <property type="entry name" value="CALCIUM-BINDING PROTEIN 8-RELATED"/>
    <property type="match status" value="1"/>
</dbReference>
<dbReference type="Pfam" id="PF13499">
    <property type="entry name" value="EF-hand_7"/>
    <property type="match status" value="1"/>
</dbReference>
<dbReference type="SMART" id="SM00054">
    <property type="entry name" value="EFh"/>
    <property type="match status" value="2"/>
</dbReference>
<dbReference type="SUPFAM" id="SSF47473">
    <property type="entry name" value="EF-hand"/>
    <property type="match status" value="1"/>
</dbReference>
<dbReference type="PROSITE" id="PS00018">
    <property type="entry name" value="EF_HAND_1"/>
    <property type="match status" value="2"/>
</dbReference>
<dbReference type="PROSITE" id="PS50222">
    <property type="entry name" value="EF_HAND_2"/>
    <property type="match status" value="2"/>
</dbReference>
<keyword id="KW-0002">3D-structure</keyword>
<keyword id="KW-0106">Calcium</keyword>
<keyword id="KW-1003">Cell membrane</keyword>
<keyword id="KW-0963">Cytoplasm</keyword>
<keyword id="KW-0333">Golgi apparatus</keyword>
<keyword id="KW-0472">Membrane</keyword>
<keyword id="KW-0479">Metal-binding</keyword>
<keyword id="KW-1185">Reference proteome</keyword>
<keyword id="KW-0677">Repeat</keyword>
<keyword id="KW-0812">Transmembrane</keyword>
<keyword id="KW-1133">Transmembrane helix</keyword>
<gene>
    <name type="primary">CABP7</name>
    <name type="synonym">CALN2</name>
</gene>
<feature type="chain" id="PRO_0000073526" description="Calcium-binding protein 7">
    <location>
        <begin position="1"/>
        <end position="215"/>
    </location>
</feature>
<feature type="topological domain" description="Cytoplasmic" evidence="2">
    <location>
        <begin position="1"/>
        <end position="188"/>
    </location>
</feature>
<feature type="transmembrane region" description="Helical; Anchor for type IV membrane protein" evidence="2">
    <location>
        <begin position="189"/>
        <end position="209"/>
    </location>
</feature>
<feature type="topological domain" description="Extracellular" evidence="2">
    <location>
        <begin position="210"/>
        <end position="215"/>
    </location>
</feature>
<feature type="domain" description="EF-hand 1" evidence="3">
    <location>
        <begin position="33"/>
        <end position="68"/>
    </location>
</feature>
<feature type="domain" description="EF-hand 2" evidence="3">
    <location>
        <begin position="69"/>
        <end position="104"/>
    </location>
</feature>
<feature type="binding site" evidence="3">
    <location>
        <position position="46"/>
    </location>
    <ligand>
        <name>Ca(2+)</name>
        <dbReference type="ChEBI" id="CHEBI:29108"/>
        <label>1</label>
    </ligand>
</feature>
<feature type="binding site" evidence="3">
    <location>
        <position position="48"/>
    </location>
    <ligand>
        <name>Ca(2+)</name>
        <dbReference type="ChEBI" id="CHEBI:29108"/>
        <label>1</label>
    </ligand>
</feature>
<feature type="binding site" evidence="3">
    <location>
        <position position="50"/>
    </location>
    <ligand>
        <name>Ca(2+)</name>
        <dbReference type="ChEBI" id="CHEBI:29108"/>
        <label>1</label>
    </ligand>
</feature>
<feature type="binding site" evidence="3">
    <location>
        <position position="57"/>
    </location>
    <ligand>
        <name>Ca(2+)</name>
        <dbReference type="ChEBI" id="CHEBI:29108"/>
        <label>1</label>
    </ligand>
</feature>
<feature type="binding site" evidence="3">
    <location>
        <position position="82"/>
    </location>
    <ligand>
        <name>Ca(2+)</name>
        <dbReference type="ChEBI" id="CHEBI:29108"/>
        <label>2</label>
    </ligand>
</feature>
<feature type="binding site" evidence="3">
    <location>
        <position position="84"/>
    </location>
    <ligand>
        <name>Ca(2+)</name>
        <dbReference type="ChEBI" id="CHEBI:29108"/>
        <label>2</label>
    </ligand>
</feature>
<feature type="binding site" evidence="3">
    <location>
        <position position="86"/>
    </location>
    <ligand>
        <name>Ca(2+)</name>
        <dbReference type="ChEBI" id="CHEBI:29108"/>
        <label>2</label>
    </ligand>
</feature>
<feature type="binding site" evidence="3">
    <location>
        <position position="88"/>
    </location>
    <ligand>
        <name>Ca(2+)</name>
        <dbReference type="ChEBI" id="CHEBI:29108"/>
        <label>2</label>
    </ligand>
</feature>
<feature type="binding site" evidence="3">
    <location>
        <position position="93"/>
    </location>
    <ligand>
        <name>Ca(2+)</name>
        <dbReference type="ChEBI" id="CHEBI:29108"/>
        <label>2</label>
    </ligand>
</feature>
<feature type="strand" evidence="6">
    <location>
        <begin position="3"/>
        <end position="5"/>
    </location>
</feature>
<feature type="turn" evidence="6">
    <location>
        <begin position="21"/>
        <end position="24"/>
    </location>
</feature>
<feature type="helix" evidence="6">
    <location>
        <begin position="32"/>
        <end position="34"/>
    </location>
</feature>
<feature type="helix" evidence="6">
    <location>
        <begin position="35"/>
        <end position="44"/>
    </location>
</feature>
<feature type="helix" evidence="6">
    <location>
        <begin position="55"/>
        <end position="64"/>
    </location>
</feature>
<feature type="turn" evidence="6">
    <location>
        <begin position="71"/>
        <end position="73"/>
    </location>
</feature>
<feature type="helix" evidence="6">
    <location>
        <begin position="74"/>
        <end position="81"/>
    </location>
</feature>
<feature type="strand" evidence="6">
    <location>
        <begin position="86"/>
        <end position="89"/>
    </location>
</feature>
<feature type="helix" evidence="6">
    <location>
        <begin position="91"/>
        <end position="97"/>
    </location>
</feature>
<comment type="function">
    <text evidence="1">Negatively regulates Golgi-to-plasma membrane trafficking by interacting with PI4KB and inhibiting its activity.</text>
</comment>
<comment type="subunit">
    <text evidence="1">Interacts with PI4KB. This binding competes with FREQ/NCS1 binding in a calcium-dependent manner (By similarity).</text>
</comment>
<comment type="interaction">
    <interactant intactId="EBI-23900553">
        <id>Q86V35</id>
    </interactant>
    <interactant intactId="EBI-3923617">
        <id>Q9H2K0</id>
        <label>MTIF3</label>
    </interactant>
    <organismsDiffer>false</organismsDiffer>
    <experiments>3</experiments>
</comment>
<comment type="subcellular location">
    <subcellularLocation>
        <location evidence="5">Golgi apparatus</location>
        <location evidence="5">trans-Golgi network membrane</location>
        <topology evidence="5">Single-pass type IV membrane protein</topology>
    </subcellularLocation>
    <subcellularLocation>
        <location evidence="4">Cytoplasm</location>
        <location evidence="4">Perinuclear region</location>
    </subcellularLocation>
    <subcellularLocation>
        <location evidence="5">Cell membrane</location>
        <topology evidence="5">Single-pass type IV membrane protein</topology>
    </subcellularLocation>
</comment>
<comment type="domain">
    <text>The C-terminal transmembrane domain (TMD) is necessary and sufficient for membrane targeting.</text>
</comment>
<proteinExistence type="evidence at protein level"/>
<sequence>MPFHPVTAALMYRGIYTVPNLLSEQRPVDIPEDELEEIREAFKVFDRDGNGFISKQELGTAMRSLGYMPNEVELEVIIQRLDMDGDGQVDFEEFVTLLGPKLSTSGIPEKFHGTDFDTVFWKCDMQKLTVDELKRLLYDTFCEHLSMKDIENIIMTEEESHLGTAEECPVDVETCSNQQIRQTCVRKSLICAFAIAFIISVMLIAANQVLRSGMK</sequence>
<reference key="1">
    <citation type="journal article" date="2004" name="Genome Res.">
        <title>The status, quality, and expansion of the NIH full-length cDNA project: the Mammalian Gene Collection (MGC).</title>
        <authorList>
            <consortium name="The MGC Project Team"/>
        </authorList>
    </citation>
    <scope>NUCLEOTIDE SEQUENCE [LARGE SCALE MRNA]</scope>
    <source>
        <tissue>Brain</tissue>
    </source>
</reference>
<reference key="2">
    <citation type="journal article" date="2009" name="Biochem. Biophys. Res. Commun.">
        <title>Membrane targeting of the EF-hand containing calcium-sensing proteins CaBP7 and CaBP8.</title>
        <authorList>
            <person name="McCue H.V."/>
            <person name="Burgoyne R.D."/>
            <person name="Haynes L.P."/>
        </authorList>
    </citation>
    <scope>SUBCELLULAR LOCATION</scope>
</reference>
<reference key="3">
    <citation type="journal article" date="2012" name="J. Biol. Chem.">
        <title>Solution NMR structure of the Ca2+-bound N-terminal domain of CaBP7: a regulator of golgi trafficking.</title>
        <authorList>
            <person name="McCue H.V."/>
            <person name="Patel P."/>
            <person name="Herbert A.P."/>
            <person name="Lian L.Y."/>
            <person name="Burgoyne R.D."/>
            <person name="Haynes L.P."/>
        </authorList>
    </citation>
    <scope>STRUCTURE BY NMR OF 1-100</scope>
    <scope>CALCIUM-BINDING SITES</scope>
</reference>
<protein>
    <recommendedName>
        <fullName>Calcium-binding protein 7</fullName>
        <shortName>CaBP7</shortName>
    </recommendedName>
    <alternativeName>
        <fullName>Calneuron II</fullName>
    </alternativeName>
    <alternativeName>
        <fullName>Calneuron-2</fullName>
    </alternativeName>
</protein>